<evidence type="ECO:0000255" key="1">
    <source>
        <dbReference type="HAMAP-Rule" id="MF_01450"/>
    </source>
</evidence>
<name>ACYP_KLEP7</name>
<dbReference type="EC" id="3.6.1.7" evidence="1"/>
<dbReference type="EMBL" id="CP000647">
    <property type="protein sequence ID" value="ABR76440.1"/>
    <property type="molecule type" value="Genomic_DNA"/>
</dbReference>
<dbReference type="SMR" id="A6T769"/>
<dbReference type="STRING" id="272620.KPN_01004"/>
<dbReference type="PaxDb" id="272620-KPN_01004"/>
<dbReference type="EnsemblBacteria" id="ABR76440">
    <property type="protein sequence ID" value="ABR76440"/>
    <property type="gene ID" value="KPN_01004"/>
</dbReference>
<dbReference type="KEGG" id="kpn:KPN_01004"/>
<dbReference type="HOGENOM" id="CLU_141932_1_2_6"/>
<dbReference type="Proteomes" id="UP000000265">
    <property type="component" value="Chromosome"/>
</dbReference>
<dbReference type="GO" id="GO:0003998">
    <property type="term" value="F:acylphosphatase activity"/>
    <property type="evidence" value="ECO:0007669"/>
    <property type="project" value="UniProtKB-UniRule"/>
</dbReference>
<dbReference type="FunFam" id="3.30.70.100:FF:000012">
    <property type="entry name" value="Acylphosphatase"/>
    <property type="match status" value="1"/>
</dbReference>
<dbReference type="Gene3D" id="3.30.70.100">
    <property type="match status" value="1"/>
</dbReference>
<dbReference type="HAMAP" id="MF_01450">
    <property type="entry name" value="Acylphosphatase_entero"/>
    <property type="match status" value="1"/>
</dbReference>
<dbReference type="InterPro" id="IPR020456">
    <property type="entry name" value="Acylphosphatase"/>
</dbReference>
<dbReference type="InterPro" id="IPR001792">
    <property type="entry name" value="Acylphosphatase-like_dom"/>
</dbReference>
<dbReference type="InterPro" id="IPR036046">
    <property type="entry name" value="Acylphosphatase-like_dom_sf"/>
</dbReference>
<dbReference type="InterPro" id="IPR028627">
    <property type="entry name" value="Acylphosphatase_bac"/>
</dbReference>
<dbReference type="InterPro" id="IPR017968">
    <property type="entry name" value="Acylphosphatase_CS"/>
</dbReference>
<dbReference type="NCBIfam" id="NF011000">
    <property type="entry name" value="PRK14426.1"/>
    <property type="match status" value="1"/>
</dbReference>
<dbReference type="PANTHER" id="PTHR10029">
    <property type="entry name" value="ACYLPHOSPHATASE"/>
    <property type="match status" value="1"/>
</dbReference>
<dbReference type="PANTHER" id="PTHR10029:SF3">
    <property type="entry name" value="ACYLPHOSPHATASE-RELATED"/>
    <property type="match status" value="1"/>
</dbReference>
<dbReference type="Pfam" id="PF00708">
    <property type="entry name" value="Acylphosphatase"/>
    <property type="match status" value="1"/>
</dbReference>
<dbReference type="PRINTS" id="PR00112">
    <property type="entry name" value="ACYLPHPHTASE"/>
</dbReference>
<dbReference type="SUPFAM" id="SSF54975">
    <property type="entry name" value="Acylphosphatase/BLUF domain-like"/>
    <property type="match status" value="1"/>
</dbReference>
<dbReference type="PROSITE" id="PS00150">
    <property type="entry name" value="ACYLPHOSPHATASE_1"/>
    <property type="match status" value="1"/>
</dbReference>
<dbReference type="PROSITE" id="PS00151">
    <property type="entry name" value="ACYLPHOSPHATASE_2"/>
    <property type="match status" value="1"/>
</dbReference>
<dbReference type="PROSITE" id="PS51160">
    <property type="entry name" value="ACYLPHOSPHATASE_3"/>
    <property type="match status" value="1"/>
</dbReference>
<gene>
    <name type="primary">acyP</name>
    <name type="ordered locus">KPN78578_09790</name>
    <name type="ORF">KPN_01004</name>
</gene>
<reference key="1">
    <citation type="submission" date="2006-09" db="EMBL/GenBank/DDBJ databases">
        <authorList>
            <consortium name="The Klebsiella pneumonia Genome Sequencing Project"/>
            <person name="McClelland M."/>
            <person name="Sanderson E.K."/>
            <person name="Spieth J."/>
            <person name="Clifton W.S."/>
            <person name="Latreille P."/>
            <person name="Sabo A."/>
            <person name="Pepin K."/>
            <person name="Bhonagiri V."/>
            <person name="Porwollik S."/>
            <person name="Ali J."/>
            <person name="Wilson R.K."/>
        </authorList>
    </citation>
    <scope>NUCLEOTIDE SEQUENCE [LARGE SCALE GENOMIC DNA]</scope>
    <source>
        <strain>ATCC 700721 / MGH 78578</strain>
    </source>
</reference>
<proteinExistence type="inferred from homology"/>
<accession>A6T769</accession>
<sequence>MIMASICTMAWVYGSVQGVGFRYSTQREALQLGVTGYARNLDDGGVEVLVCGEAEQVEKLIAWLKAGGPRSARVDRVLTEPHQPTRSWDKFAILY</sequence>
<organism>
    <name type="scientific">Klebsiella pneumoniae subsp. pneumoniae (strain ATCC 700721 / MGH 78578)</name>
    <dbReference type="NCBI Taxonomy" id="272620"/>
    <lineage>
        <taxon>Bacteria</taxon>
        <taxon>Pseudomonadati</taxon>
        <taxon>Pseudomonadota</taxon>
        <taxon>Gammaproteobacteria</taxon>
        <taxon>Enterobacterales</taxon>
        <taxon>Enterobacteriaceae</taxon>
        <taxon>Klebsiella/Raoultella group</taxon>
        <taxon>Klebsiella</taxon>
        <taxon>Klebsiella pneumoniae complex</taxon>
    </lineage>
</organism>
<comment type="catalytic activity">
    <reaction evidence="1">
        <text>an acyl phosphate + H2O = a carboxylate + phosphate + H(+)</text>
        <dbReference type="Rhea" id="RHEA:14965"/>
        <dbReference type="ChEBI" id="CHEBI:15377"/>
        <dbReference type="ChEBI" id="CHEBI:15378"/>
        <dbReference type="ChEBI" id="CHEBI:29067"/>
        <dbReference type="ChEBI" id="CHEBI:43474"/>
        <dbReference type="ChEBI" id="CHEBI:59918"/>
        <dbReference type="EC" id="3.6.1.7"/>
    </reaction>
</comment>
<comment type="similarity">
    <text evidence="1">Belongs to the acylphosphatase family.</text>
</comment>
<feature type="chain" id="PRO_0000326723" description="Acylphosphatase">
    <location>
        <begin position="1"/>
        <end position="95"/>
    </location>
</feature>
<feature type="domain" description="Acylphosphatase-like" evidence="1">
    <location>
        <begin position="7"/>
        <end position="95"/>
    </location>
</feature>
<feature type="active site" evidence="1">
    <location>
        <position position="22"/>
    </location>
</feature>
<feature type="active site" evidence="1">
    <location>
        <position position="40"/>
    </location>
</feature>
<protein>
    <recommendedName>
        <fullName evidence="1">Acylphosphatase</fullName>
        <ecNumber evidence="1">3.6.1.7</ecNumber>
    </recommendedName>
    <alternativeName>
        <fullName evidence="1">Acylphosphate phosphohydrolase</fullName>
    </alternativeName>
</protein>
<keyword id="KW-0378">Hydrolase</keyword>